<sequence>MSKLSEKEAFLFDRSIDQFEKGQYSKSLKTIQSVLKKKPKHPDSVALLGLNLCKLHDSRSALLKCGYASSIDPKSQFCWHALAIVYRETKDYNNSLKCYQNALAISPNNESLWYDAAYLQAQLGLYQPLFDNWNRLLQLDSSNLEYRLCFTLSAFLSGNYKESLEQIQYLISSCNLSPLVVSRLISFLPRICEHIENGSQTVLEILLMNQNSFLNNFNFEHIKADFAFRQKNYEESIYLYARLLIKFPNRLDYSEKYLNSLWNFYKSGGLALDLLLKRTDSLIKTFSEILQTGISVLIFLLSKNLDYDFCLNHLISYSMHHFIPSFISLLKIPLKTNDAFSKKLITMLSNFREGDSAKNIPTHKLWCTYCLCLAHYKLGDYEESNYWLNLAIDHTPTYPELFLAKAKIFLCMGEIEEALCSFKRSVELDKSDRALASKYAKYLIRMDRNEEAYIVLSKFSRFRFGGVCNYLAETECVWFLVEDGESLLRQKLYGLALKRFHSIYQIYKKWSFLKFDYFTQCAEDGEFQEYVELVEWSDNLWSSTDYLRATLGALTIYLLLFESKFNMYGNKAEEISHMSEVEQIAYAREDNKKIMKLQKIEEDKIKSYIPSESEEPLVIDEDYFGHKLLITDDPLTEAMRFLQPICWHKIKGWGFLKILSSKLYKLKGIIFCYYALTNNIEGLHQKANSLETSVL</sequence>
<comment type="function">
    <text evidence="1">Non-catalytic component of the NatA N-terminal acetyltransferase, which catalyzes acetylation of proteins beginning with Met-Ser, Met-Gly and Met-Ala. N-acetylation plays a role in normal eukaryotic translation and processing, protect against proteolytic degradation and protein turnover (By similarity).</text>
</comment>
<comment type="subunit">
    <text evidence="1">Component of the N-terminal acetyltransferase A (NatA) complex.</text>
</comment>
<comment type="subcellular location">
    <subcellularLocation>
        <location evidence="2">Cytoplasm</location>
    </subcellularLocation>
    <subcellularLocation>
        <location evidence="2">Nucleus</location>
    </subcellularLocation>
</comment>
<evidence type="ECO:0000250" key="1"/>
<evidence type="ECO:0000269" key="2">
    <source>
    </source>
</evidence>
<feature type="chain" id="PRO_0000363382" description="N-terminal acetyltransferase A complex subunit-like protein C418.02">
    <location>
        <begin position="1"/>
        <end position="695"/>
    </location>
</feature>
<feature type="repeat" description="TPR 1">
    <location>
        <begin position="8"/>
        <end position="41"/>
    </location>
</feature>
<feature type="repeat" description="TPR 2">
    <location>
        <begin position="43"/>
        <end position="75"/>
    </location>
</feature>
<feature type="repeat" description="TPR 3">
    <location>
        <begin position="76"/>
        <end position="109"/>
    </location>
</feature>
<feature type="repeat" description="TPR 4">
    <location>
        <begin position="111"/>
        <end position="143"/>
    </location>
</feature>
<feature type="repeat" description="TPR 5">
    <location>
        <begin position="145"/>
        <end position="177"/>
    </location>
</feature>
<feature type="repeat" description="TPR 6">
    <location>
        <begin position="217"/>
        <end position="250"/>
    </location>
</feature>
<feature type="repeat" description="TPR 7">
    <location>
        <begin position="262"/>
        <end position="296"/>
    </location>
</feature>
<feature type="repeat" description="TPR 8">
    <location>
        <begin position="365"/>
        <end position="398"/>
    </location>
</feature>
<feature type="repeat" description="TPR 9">
    <location>
        <begin position="399"/>
        <end position="432"/>
    </location>
</feature>
<feature type="repeat" description="TPR 10">
    <location>
        <begin position="477"/>
        <end position="510"/>
    </location>
</feature>
<reference key="1">
    <citation type="journal article" date="2002" name="Nature">
        <title>The genome sequence of Schizosaccharomyces pombe.</title>
        <authorList>
            <person name="Wood V."/>
            <person name="Gwilliam R."/>
            <person name="Rajandream M.A."/>
            <person name="Lyne M.H."/>
            <person name="Lyne R."/>
            <person name="Stewart A."/>
            <person name="Sgouros J.G."/>
            <person name="Peat N."/>
            <person name="Hayles J."/>
            <person name="Baker S.G."/>
            <person name="Basham D."/>
            <person name="Bowman S."/>
            <person name="Brooks K."/>
            <person name="Brown D."/>
            <person name="Brown S."/>
            <person name="Chillingworth T."/>
            <person name="Churcher C.M."/>
            <person name="Collins M."/>
            <person name="Connor R."/>
            <person name="Cronin A."/>
            <person name="Davis P."/>
            <person name="Feltwell T."/>
            <person name="Fraser A."/>
            <person name="Gentles S."/>
            <person name="Goble A."/>
            <person name="Hamlin N."/>
            <person name="Harris D.E."/>
            <person name="Hidalgo J."/>
            <person name="Hodgson G."/>
            <person name="Holroyd S."/>
            <person name="Hornsby T."/>
            <person name="Howarth S."/>
            <person name="Huckle E.J."/>
            <person name="Hunt S."/>
            <person name="Jagels K."/>
            <person name="James K.D."/>
            <person name="Jones L."/>
            <person name="Jones M."/>
            <person name="Leather S."/>
            <person name="McDonald S."/>
            <person name="McLean J."/>
            <person name="Mooney P."/>
            <person name="Moule S."/>
            <person name="Mungall K.L."/>
            <person name="Murphy L.D."/>
            <person name="Niblett D."/>
            <person name="Odell C."/>
            <person name="Oliver K."/>
            <person name="O'Neil S."/>
            <person name="Pearson D."/>
            <person name="Quail M.A."/>
            <person name="Rabbinowitsch E."/>
            <person name="Rutherford K.M."/>
            <person name="Rutter S."/>
            <person name="Saunders D."/>
            <person name="Seeger K."/>
            <person name="Sharp S."/>
            <person name="Skelton J."/>
            <person name="Simmonds M.N."/>
            <person name="Squares R."/>
            <person name="Squares S."/>
            <person name="Stevens K."/>
            <person name="Taylor K."/>
            <person name="Taylor R.G."/>
            <person name="Tivey A."/>
            <person name="Walsh S.V."/>
            <person name="Warren T."/>
            <person name="Whitehead S."/>
            <person name="Woodward J.R."/>
            <person name="Volckaert G."/>
            <person name="Aert R."/>
            <person name="Robben J."/>
            <person name="Grymonprez B."/>
            <person name="Weltjens I."/>
            <person name="Vanstreels E."/>
            <person name="Rieger M."/>
            <person name="Schaefer M."/>
            <person name="Mueller-Auer S."/>
            <person name="Gabel C."/>
            <person name="Fuchs M."/>
            <person name="Duesterhoeft A."/>
            <person name="Fritzc C."/>
            <person name="Holzer E."/>
            <person name="Moestl D."/>
            <person name="Hilbert H."/>
            <person name="Borzym K."/>
            <person name="Langer I."/>
            <person name="Beck A."/>
            <person name="Lehrach H."/>
            <person name="Reinhardt R."/>
            <person name="Pohl T.M."/>
            <person name="Eger P."/>
            <person name="Zimmermann W."/>
            <person name="Wedler H."/>
            <person name="Wambutt R."/>
            <person name="Purnelle B."/>
            <person name="Goffeau A."/>
            <person name="Cadieu E."/>
            <person name="Dreano S."/>
            <person name="Gloux S."/>
            <person name="Lelaure V."/>
            <person name="Mottier S."/>
            <person name="Galibert F."/>
            <person name="Aves S.J."/>
            <person name="Xiang Z."/>
            <person name="Hunt C."/>
            <person name="Moore K."/>
            <person name="Hurst S.M."/>
            <person name="Lucas M."/>
            <person name="Rochet M."/>
            <person name="Gaillardin C."/>
            <person name="Tallada V.A."/>
            <person name="Garzon A."/>
            <person name="Thode G."/>
            <person name="Daga R.R."/>
            <person name="Cruzado L."/>
            <person name="Jimenez J."/>
            <person name="Sanchez M."/>
            <person name="del Rey F."/>
            <person name="Benito J."/>
            <person name="Dominguez A."/>
            <person name="Revuelta J.L."/>
            <person name="Moreno S."/>
            <person name="Armstrong J."/>
            <person name="Forsburg S.L."/>
            <person name="Cerutti L."/>
            <person name="Lowe T."/>
            <person name="McCombie W.R."/>
            <person name="Paulsen I."/>
            <person name="Potashkin J."/>
            <person name="Shpakovski G.V."/>
            <person name="Ussery D."/>
            <person name="Barrell B.G."/>
            <person name="Nurse P."/>
        </authorList>
    </citation>
    <scope>NUCLEOTIDE SEQUENCE [LARGE SCALE GENOMIC DNA]</scope>
    <source>
        <strain>972 / ATCC 24843</strain>
    </source>
</reference>
<reference key="2">
    <citation type="journal article" date="2006" name="Nat. Biotechnol.">
        <title>ORFeome cloning and global analysis of protein localization in the fission yeast Schizosaccharomyces pombe.</title>
        <authorList>
            <person name="Matsuyama A."/>
            <person name="Arai R."/>
            <person name="Yashiroda Y."/>
            <person name="Shirai A."/>
            <person name="Kamata A."/>
            <person name="Sekido S."/>
            <person name="Kobayashi Y."/>
            <person name="Hashimoto A."/>
            <person name="Hamamoto M."/>
            <person name="Hiraoka Y."/>
            <person name="Horinouchi S."/>
            <person name="Yoshida M."/>
        </authorList>
    </citation>
    <scope>SUBCELLULAR LOCATION [LARGE SCALE ANALYSIS]</scope>
</reference>
<dbReference type="EMBL" id="CU329671">
    <property type="protein sequence ID" value="CAB51353.1"/>
    <property type="molecule type" value="Genomic_DNA"/>
</dbReference>
<dbReference type="PIR" id="T40451">
    <property type="entry name" value="T40451"/>
</dbReference>
<dbReference type="SMR" id="Q9Y7X2"/>
<dbReference type="BioGRID" id="277327">
    <property type="interactions" value="13"/>
</dbReference>
<dbReference type="FunCoup" id="Q9Y7X2">
    <property type="interactions" value="4"/>
</dbReference>
<dbReference type="STRING" id="284812.Q9Y7X2"/>
<dbReference type="iPTMnet" id="Q9Y7X2"/>
<dbReference type="PaxDb" id="4896-SPBC418.02.1"/>
<dbReference type="EnsemblFungi" id="SPBC418.02.1">
    <property type="protein sequence ID" value="SPBC418.02.1:pep"/>
    <property type="gene ID" value="SPBC418.02"/>
</dbReference>
<dbReference type="KEGG" id="spo:2540808"/>
<dbReference type="PomBase" id="SPBC418.02"/>
<dbReference type="VEuPathDB" id="FungiDB:SPBC418.02"/>
<dbReference type="eggNOG" id="KOG1156">
    <property type="taxonomic scope" value="Eukaryota"/>
</dbReference>
<dbReference type="HOGENOM" id="CLU_006686_1_1_1"/>
<dbReference type="InParanoid" id="Q9Y7X2"/>
<dbReference type="OMA" id="AETECIW"/>
<dbReference type="PhylomeDB" id="Q9Y7X2"/>
<dbReference type="PRO" id="PR:Q9Y7X2"/>
<dbReference type="Proteomes" id="UP000002485">
    <property type="component" value="Chromosome II"/>
</dbReference>
<dbReference type="GO" id="GO:0005737">
    <property type="term" value="C:cytoplasm"/>
    <property type="evidence" value="ECO:0000318"/>
    <property type="project" value="GO_Central"/>
</dbReference>
<dbReference type="GO" id="GO:0005829">
    <property type="term" value="C:cytosol"/>
    <property type="evidence" value="ECO:0007005"/>
    <property type="project" value="PomBase"/>
</dbReference>
<dbReference type="GO" id="GO:0031415">
    <property type="term" value="C:NatA complex"/>
    <property type="evidence" value="ECO:0000318"/>
    <property type="project" value="GO_Central"/>
</dbReference>
<dbReference type="GO" id="GO:0005634">
    <property type="term" value="C:nucleus"/>
    <property type="evidence" value="ECO:0007005"/>
    <property type="project" value="PomBase"/>
</dbReference>
<dbReference type="GO" id="GO:0010698">
    <property type="term" value="F:acetyltransferase activator activity"/>
    <property type="evidence" value="ECO:0000318"/>
    <property type="project" value="GO_Central"/>
</dbReference>
<dbReference type="GO" id="GO:0016740">
    <property type="term" value="F:transferase activity"/>
    <property type="evidence" value="ECO:0007669"/>
    <property type="project" value="UniProtKB-KW"/>
</dbReference>
<dbReference type="GO" id="GO:0051604">
    <property type="term" value="P:protein maturation"/>
    <property type="evidence" value="ECO:0000303"/>
    <property type="project" value="PomBase"/>
</dbReference>
<dbReference type="Gene3D" id="1.25.40.1010">
    <property type="match status" value="1"/>
</dbReference>
<dbReference type="Gene3D" id="1.25.40.1040">
    <property type="match status" value="1"/>
</dbReference>
<dbReference type="InterPro" id="IPR021183">
    <property type="entry name" value="NatA_aux_su"/>
</dbReference>
<dbReference type="InterPro" id="IPR011990">
    <property type="entry name" value="TPR-like_helical_dom_sf"/>
</dbReference>
<dbReference type="InterPro" id="IPR019734">
    <property type="entry name" value="TPR_rpt"/>
</dbReference>
<dbReference type="PANTHER" id="PTHR22767:SF14">
    <property type="entry name" value="N-TERMINAL ACETYLTRANSFERASE A COMPLEX SUBUNIT-LIKE PROTEIN C418.02"/>
    <property type="match status" value="1"/>
</dbReference>
<dbReference type="PANTHER" id="PTHR22767">
    <property type="entry name" value="N-TERMINAL ACETYLTRANSFERASE-RELATED"/>
    <property type="match status" value="1"/>
</dbReference>
<dbReference type="Pfam" id="PF12569">
    <property type="entry name" value="NatA_aux_su"/>
    <property type="match status" value="1"/>
</dbReference>
<dbReference type="Pfam" id="PF13414">
    <property type="entry name" value="TPR_11"/>
    <property type="match status" value="1"/>
</dbReference>
<dbReference type="PIRSF" id="PIRSF000422">
    <property type="entry name" value="N-terminal-AcTrfase-A_aux_su"/>
    <property type="match status" value="1"/>
</dbReference>
<dbReference type="SMART" id="SM00028">
    <property type="entry name" value="TPR"/>
    <property type="match status" value="5"/>
</dbReference>
<dbReference type="SUPFAM" id="SSF48452">
    <property type="entry name" value="TPR-like"/>
    <property type="match status" value="3"/>
</dbReference>
<dbReference type="PROSITE" id="PS50005">
    <property type="entry name" value="TPR"/>
    <property type="match status" value="4"/>
</dbReference>
<dbReference type="PROSITE" id="PS50293">
    <property type="entry name" value="TPR_REGION"/>
    <property type="match status" value="2"/>
</dbReference>
<gene>
    <name type="ORF">SPBC418.02</name>
</gene>
<name>YOP2_SCHPO</name>
<accession>Q9Y7X2</accession>
<keyword id="KW-0963">Cytoplasm</keyword>
<keyword id="KW-0539">Nucleus</keyword>
<keyword id="KW-1185">Reference proteome</keyword>
<keyword id="KW-0677">Repeat</keyword>
<keyword id="KW-0802">TPR repeat</keyword>
<keyword id="KW-0808">Transferase</keyword>
<proteinExistence type="inferred from homology"/>
<organism>
    <name type="scientific">Schizosaccharomyces pombe (strain 972 / ATCC 24843)</name>
    <name type="common">Fission yeast</name>
    <dbReference type="NCBI Taxonomy" id="284812"/>
    <lineage>
        <taxon>Eukaryota</taxon>
        <taxon>Fungi</taxon>
        <taxon>Dikarya</taxon>
        <taxon>Ascomycota</taxon>
        <taxon>Taphrinomycotina</taxon>
        <taxon>Schizosaccharomycetes</taxon>
        <taxon>Schizosaccharomycetales</taxon>
        <taxon>Schizosaccharomycetaceae</taxon>
        <taxon>Schizosaccharomyces</taxon>
    </lineage>
</organism>
<protein>
    <recommendedName>
        <fullName>N-terminal acetyltransferase A complex subunit-like protein C418.02</fullName>
        <shortName>NatA complex subunit-like protein C418.02</shortName>
    </recommendedName>
</protein>